<organism>
    <name type="scientific">Neisseria gonorrhoeae (strain ATCC 700825 / FA 1090)</name>
    <dbReference type="NCBI Taxonomy" id="242231"/>
    <lineage>
        <taxon>Bacteria</taxon>
        <taxon>Pseudomonadati</taxon>
        <taxon>Pseudomonadota</taxon>
        <taxon>Betaproteobacteria</taxon>
        <taxon>Neisseriales</taxon>
        <taxon>Neisseriaceae</taxon>
        <taxon>Neisseria</taxon>
    </lineage>
</organism>
<gene>
    <name evidence="1" type="primary">rplR</name>
    <name type="ordered locus">NGO_18241</name>
    <name type="ORF">NGO_1824.1</name>
</gene>
<name>RL18_NEIG1</name>
<dbReference type="EMBL" id="AE004969">
    <property type="protein sequence ID" value="AAW90444.1"/>
    <property type="molecule type" value="Genomic_DNA"/>
</dbReference>
<dbReference type="RefSeq" id="WP_002215441.1">
    <property type="nucleotide sequence ID" value="NC_002946.2"/>
</dbReference>
<dbReference type="RefSeq" id="YP_208856.1">
    <property type="nucleotide sequence ID" value="NC_002946.2"/>
</dbReference>
<dbReference type="SMR" id="Q5F5U3"/>
<dbReference type="STRING" id="242231.NGO_18241"/>
<dbReference type="GeneID" id="93387233"/>
<dbReference type="KEGG" id="ngo:NGO_18241"/>
<dbReference type="PATRIC" id="fig|242231.10.peg.2193"/>
<dbReference type="HOGENOM" id="CLU_098841_0_1_4"/>
<dbReference type="Proteomes" id="UP000000535">
    <property type="component" value="Chromosome"/>
</dbReference>
<dbReference type="GO" id="GO:0022625">
    <property type="term" value="C:cytosolic large ribosomal subunit"/>
    <property type="evidence" value="ECO:0007669"/>
    <property type="project" value="TreeGrafter"/>
</dbReference>
<dbReference type="GO" id="GO:0008097">
    <property type="term" value="F:5S rRNA binding"/>
    <property type="evidence" value="ECO:0007669"/>
    <property type="project" value="TreeGrafter"/>
</dbReference>
<dbReference type="GO" id="GO:0003735">
    <property type="term" value="F:structural constituent of ribosome"/>
    <property type="evidence" value="ECO:0007669"/>
    <property type="project" value="InterPro"/>
</dbReference>
<dbReference type="GO" id="GO:0006412">
    <property type="term" value="P:translation"/>
    <property type="evidence" value="ECO:0007669"/>
    <property type="project" value="UniProtKB-UniRule"/>
</dbReference>
<dbReference type="CDD" id="cd00432">
    <property type="entry name" value="Ribosomal_L18_L5e"/>
    <property type="match status" value="1"/>
</dbReference>
<dbReference type="FunFam" id="3.30.420.100:FF:000001">
    <property type="entry name" value="50S ribosomal protein L18"/>
    <property type="match status" value="1"/>
</dbReference>
<dbReference type="Gene3D" id="3.30.420.100">
    <property type="match status" value="1"/>
</dbReference>
<dbReference type="HAMAP" id="MF_01337_B">
    <property type="entry name" value="Ribosomal_uL18_B"/>
    <property type="match status" value="1"/>
</dbReference>
<dbReference type="InterPro" id="IPR004389">
    <property type="entry name" value="Ribosomal_uL18_bac-type"/>
</dbReference>
<dbReference type="InterPro" id="IPR005484">
    <property type="entry name" value="Ribosomal_uL18_bac/euk"/>
</dbReference>
<dbReference type="NCBIfam" id="TIGR00060">
    <property type="entry name" value="L18_bact"/>
    <property type="match status" value="1"/>
</dbReference>
<dbReference type="PANTHER" id="PTHR12899">
    <property type="entry name" value="39S RIBOSOMAL PROTEIN L18, MITOCHONDRIAL"/>
    <property type="match status" value="1"/>
</dbReference>
<dbReference type="PANTHER" id="PTHR12899:SF3">
    <property type="entry name" value="LARGE RIBOSOMAL SUBUNIT PROTEIN UL18M"/>
    <property type="match status" value="1"/>
</dbReference>
<dbReference type="Pfam" id="PF00861">
    <property type="entry name" value="Ribosomal_L18p"/>
    <property type="match status" value="1"/>
</dbReference>
<dbReference type="SUPFAM" id="SSF53137">
    <property type="entry name" value="Translational machinery components"/>
    <property type="match status" value="1"/>
</dbReference>
<evidence type="ECO:0000255" key="1">
    <source>
        <dbReference type="HAMAP-Rule" id="MF_01337"/>
    </source>
</evidence>
<evidence type="ECO:0000305" key="2"/>
<feature type="chain" id="PRO_0000131306" description="Large ribosomal subunit protein uL18">
    <location>
        <begin position="1"/>
        <end position="117"/>
    </location>
</feature>
<sequence>MDKHTTRLRRARKTRARIADLKMVRLCVFRSNNHIYAQVISAEGDKVLAQASTLEAEVRGSLKSGSNVEAAAIVGKRIAEKAKAAGVEKVAFDRSGFQYHGRVKALAEAARENGLSF</sequence>
<reference key="1">
    <citation type="submission" date="2003-03" db="EMBL/GenBank/DDBJ databases">
        <title>The complete genome sequence of Neisseria gonorrhoeae.</title>
        <authorList>
            <person name="Lewis L.A."/>
            <person name="Gillaspy A.F."/>
            <person name="McLaughlin R.E."/>
            <person name="Gipson M."/>
            <person name="Ducey T.F."/>
            <person name="Ownbey T."/>
            <person name="Hartman K."/>
            <person name="Nydick C."/>
            <person name="Carson M.B."/>
            <person name="Vaughn J."/>
            <person name="Thomson C."/>
            <person name="Song L."/>
            <person name="Lin S."/>
            <person name="Yuan X."/>
            <person name="Najar F."/>
            <person name="Zhan M."/>
            <person name="Ren Q."/>
            <person name="Zhu H."/>
            <person name="Qi S."/>
            <person name="Kenton S.M."/>
            <person name="Lai H."/>
            <person name="White J.D."/>
            <person name="Clifton S."/>
            <person name="Roe B.A."/>
            <person name="Dyer D.W."/>
        </authorList>
    </citation>
    <scope>NUCLEOTIDE SEQUENCE [LARGE SCALE GENOMIC DNA]</scope>
    <source>
        <strain>ATCC 700825 / FA 1090</strain>
    </source>
</reference>
<accession>Q5F5U3</accession>
<comment type="function">
    <text evidence="1">This is one of the proteins that bind and probably mediate the attachment of the 5S RNA into the large ribosomal subunit, where it forms part of the central protuberance.</text>
</comment>
<comment type="subunit">
    <text evidence="1">Part of the 50S ribosomal subunit; part of the 5S rRNA/L5/L18/L25 subcomplex. Contacts the 5S and 23S rRNAs.</text>
</comment>
<comment type="similarity">
    <text evidence="1">Belongs to the universal ribosomal protein uL18 family.</text>
</comment>
<protein>
    <recommendedName>
        <fullName evidence="1">Large ribosomal subunit protein uL18</fullName>
    </recommendedName>
    <alternativeName>
        <fullName evidence="2">50S ribosomal protein L18</fullName>
    </alternativeName>
</protein>
<proteinExistence type="inferred from homology"/>
<keyword id="KW-1185">Reference proteome</keyword>
<keyword id="KW-0687">Ribonucleoprotein</keyword>
<keyword id="KW-0689">Ribosomal protein</keyword>
<keyword id="KW-0694">RNA-binding</keyword>
<keyword id="KW-0699">rRNA-binding</keyword>